<dbReference type="EC" id="6.3.5.2" evidence="1"/>
<dbReference type="EMBL" id="CP000749">
    <property type="protein sequence ID" value="ABR73043.1"/>
    <property type="molecule type" value="Genomic_DNA"/>
</dbReference>
<dbReference type="SMR" id="A6W2W4"/>
<dbReference type="STRING" id="400668.Mmwyl1_4147"/>
<dbReference type="KEGG" id="mmw:Mmwyl1_4147"/>
<dbReference type="eggNOG" id="COG0518">
    <property type="taxonomic scope" value="Bacteria"/>
</dbReference>
<dbReference type="eggNOG" id="COG0519">
    <property type="taxonomic scope" value="Bacteria"/>
</dbReference>
<dbReference type="HOGENOM" id="CLU_014340_0_5_6"/>
<dbReference type="OrthoDB" id="9802219at2"/>
<dbReference type="UniPathway" id="UPA00189">
    <property type="reaction ID" value="UER00296"/>
</dbReference>
<dbReference type="GO" id="GO:0005829">
    <property type="term" value="C:cytosol"/>
    <property type="evidence" value="ECO:0007669"/>
    <property type="project" value="TreeGrafter"/>
</dbReference>
<dbReference type="GO" id="GO:0005524">
    <property type="term" value="F:ATP binding"/>
    <property type="evidence" value="ECO:0007669"/>
    <property type="project" value="UniProtKB-UniRule"/>
</dbReference>
<dbReference type="GO" id="GO:0003921">
    <property type="term" value="F:GMP synthase activity"/>
    <property type="evidence" value="ECO:0007669"/>
    <property type="project" value="InterPro"/>
</dbReference>
<dbReference type="CDD" id="cd01742">
    <property type="entry name" value="GATase1_GMP_Synthase"/>
    <property type="match status" value="1"/>
</dbReference>
<dbReference type="CDD" id="cd01997">
    <property type="entry name" value="GMP_synthase_C"/>
    <property type="match status" value="1"/>
</dbReference>
<dbReference type="FunFam" id="3.30.300.10:FF:000002">
    <property type="entry name" value="GMP synthase [glutamine-hydrolyzing]"/>
    <property type="match status" value="1"/>
</dbReference>
<dbReference type="FunFam" id="3.40.50.620:FF:000001">
    <property type="entry name" value="GMP synthase [glutamine-hydrolyzing]"/>
    <property type="match status" value="1"/>
</dbReference>
<dbReference type="FunFam" id="3.40.50.880:FF:000001">
    <property type="entry name" value="GMP synthase [glutamine-hydrolyzing]"/>
    <property type="match status" value="1"/>
</dbReference>
<dbReference type="Gene3D" id="3.30.300.10">
    <property type="match status" value="1"/>
</dbReference>
<dbReference type="Gene3D" id="3.40.50.880">
    <property type="match status" value="1"/>
</dbReference>
<dbReference type="Gene3D" id="3.40.50.620">
    <property type="entry name" value="HUPs"/>
    <property type="match status" value="1"/>
</dbReference>
<dbReference type="HAMAP" id="MF_00344">
    <property type="entry name" value="GMP_synthase"/>
    <property type="match status" value="1"/>
</dbReference>
<dbReference type="InterPro" id="IPR029062">
    <property type="entry name" value="Class_I_gatase-like"/>
</dbReference>
<dbReference type="InterPro" id="IPR017926">
    <property type="entry name" value="GATASE"/>
</dbReference>
<dbReference type="InterPro" id="IPR001674">
    <property type="entry name" value="GMP_synth_C"/>
</dbReference>
<dbReference type="InterPro" id="IPR004739">
    <property type="entry name" value="GMP_synth_GATase"/>
</dbReference>
<dbReference type="InterPro" id="IPR022955">
    <property type="entry name" value="GMP_synthase"/>
</dbReference>
<dbReference type="InterPro" id="IPR025777">
    <property type="entry name" value="GMPS_ATP_PPase_dom"/>
</dbReference>
<dbReference type="InterPro" id="IPR022310">
    <property type="entry name" value="NAD/GMP_synthase"/>
</dbReference>
<dbReference type="InterPro" id="IPR014729">
    <property type="entry name" value="Rossmann-like_a/b/a_fold"/>
</dbReference>
<dbReference type="NCBIfam" id="TIGR00884">
    <property type="entry name" value="guaA_Cterm"/>
    <property type="match status" value="1"/>
</dbReference>
<dbReference type="NCBIfam" id="TIGR00888">
    <property type="entry name" value="guaA_Nterm"/>
    <property type="match status" value="1"/>
</dbReference>
<dbReference type="NCBIfam" id="NF000848">
    <property type="entry name" value="PRK00074.1"/>
    <property type="match status" value="1"/>
</dbReference>
<dbReference type="PANTHER" id="PTHR11922:SF2">
    <property type="entry name" value="GMP SYNTHASE [GLUTAMINE-HYDROLYZING]"/>
    <property type="match status" value="1"/>
</dbReference>
<dbReference type="PANTHER" id="PTHR11922">
    <property type="entry name" value="GMP SYNTHASE-RELATED"/>
    <property type="match status" value="1"/>
</dbReference>
<dbReference type="Pfam" id="PF00117">
    <property type="entry name" value="GATase"/>
    <property type="match status" value="1"/>
</dbReference>
<dbReference type="Pfam" id="PF00958">
    <property type="entry name" value="GMP_synt_C"/>
    <property type="match status" value="1"/>
</dbReference>
<dbReference type="Pfam" id="PF02540">
    <property type="entry name" value="NAD_synthase"/>
    <property type="match status" value="1"/>
</dbReference>
<dbReference type="PRINTS" id="PR00097">
    <property type="entry name" value="ANTSNTHASEII"/>
</dbReference>
<dbReference type="PRINTS" id="PR00099">
    <property type="entry name" value="CPSGATASE"/>
</dbReference>
<dbReference type="PRINTS" id="PR00096">
    <property type="entry name" value="GATASE"/>
</dbReference>
<dbReference type="SUPFAM" id="SSF52402">
    <property type="entry name" value="Adenine nucleotide alpha hydrolases-like"/>
    <property type="match status" value="1"/>
</dbReference>
<dbReference type="SUPFAM" id="SSF52317">
    <property type="entry name" value="Class I glutamine amidotransferase-like"/>
    <property type="match status" value="1"/>
</dbReference>
<dbReference type="SUPFAM" id="SSF54810">
    <property type="entry name" value="GMP synthetase C-terminal dimerisation domain"/>
    <property type="match status" value="1"/>
</dbReference>
<dbReference type="PROSITE" id="PS51273">
    <property type="entry name" value="GATASE_TYPE_1"/>
    <property type="match status" value="1"/>
</dbReference>
<dbReference type="PROSITE" id="PS51553">
    <property type="entry name" value="GMPS_ATP_PPASE"/>
    <property type="match status" value="1"/>
</dbReference>
<accession>A6W2W4</accession>
<organism>
    <name type="scientific">Marinomonas sp. (strain MWYL1)</name>
    <dbReference type="NCBI Taxonomy" id="400668"/>
    <lineage>
        <taxon>Bacteria</taxon>
        <taxon>Pseudomonadati</taxon>
        <taxon>Pseudomonadota</taxon>
        <taxon>Gammaproteobacteria</taxon>
        <taxon>Oceanospirillales</taxon>
        <taxon>Oceanospirillaceae</taxon>
        <taxon>Marinomonas</taxon>
    </lineage>
</organism>
<comment type="function">
    <text evidence="1">Catalyzes the synthesis of GMP from XMP.</text>
</comment>
<comment type="catalytic activity">
    <reaction evidence="1">
        <text>XMP + L-glutamine + ATP + H2O = GMP + L-glutamate + AMP + diphosphate + 2 H(+)</text>
        <dbReference type="Rhea" id="RHEA:11680"/>
        <dbReference type="ChEBI" id="CHEBI:15377"/>
        <dbReference type="ChEBI" id="CHEBI:15378"/>
        <dbReference type="ChEBI" id="CHEBI:29985"/>
        <dbReference type="ChEBI" id="CHEBI:30616"/>
        <dbReference type="ChEBI" id="CHEBI:33019"/>
        <dbReference type="ChEBI" id="CHEBI:57464"/>
        <dbReference type="ChEBI" id="CHEBI:58115"/>
        <dbReference type="ChEBI" id="CHEBI:58359"/>
        <dbReference type="ChEBI" id="CHEBI:456215"/>
        <dbReference type="EC" id="6.3.5.2"/>
    </reaction>
</comment>
<comment type="pathway">
    <text evidence="1">Purine metabolism; GMP biosynthesis; GMP from XMP (L-Gln route): step 1/1.</text>
</comment>
<comment type="subunit">
    <text evidence="1">Homodimer.</text>
</comment>
<gene>
    <name evidence="1" type="primary">guaA</name>
    <name type="ordered locus">Mmwyl1_4147</name>
</gene>
<reference key="1">
    <citation type="submission" date="2007-06" db="EMBL/GenBank/DDBJ databases">
        <title>Complete sequence of Marinomonas sp. MWYL1.</title>
        <authorList>
            <consortium name="US DOE Joint Genome Institute"/>
            <person name="Copeland A."/>
            <person name="Lucas S."/>
            <person name="Lapidus A."/>
            <person name="Barry K."/>
            <person name="Glavina del Rio T."/>
            <person name="Dalin E."/>
            <person name="Tice H."/>
            <person name="Pitluck S."/>
            <person name="Kiss H."/>
            <person name="Brettin T."/>
            <person name="Bruce D."/>
            <person name="Detter J.C."/>
            <person name="Han C."/>
            <person name="Schmutz J."/>
            <person name="Larimer F."/>
            <person name="Land M."/>
            <person name="Hauser L."/>
            <person name="Kyrpides N."/>
            <person name="Kim E."/>
            <person name="Johnston A.W.B."/>
            <person name="Todd J.D."/>
            <person name="Rogers R."/>
            <person name="Wexler M."/>
            <person name="Bond P.L."/>
            <person name="Li Y."/>
            <person name="Richardson P."/>
        </authorList>
    </citation>
    <scope>NUCLEOTIDE SEQUENCE [LARGE SCALE GENOMIC DNA]</scope>
    <source>
        <strain>MWYL1</strain>
    </source>
</reference>
<name>GUAA_MARMS</name>
<protein>
    <recommendedName>
        <fullName evidence="1">GMP synthase [glutamine-hydrolyzing]</fullName>
        <ecNumber evidence="1">6.3.5.2</ecNumber>
    </recommendedName>
    <alternativeName>
        <fullName evidence="1">GMP synthetase</fullName>
    </alternativeName>
    <alternativeName>
        <fullName evidence="1">Glutamine amidotransferase</fullName>
    </alternativeName>
</protein>
<evidence type="ECO:0000255" key="1">
    <source>
        <dbReference type="HAMAP-Rule" id="MF_00344"/>
    </source>
</evidence>
<keyword id="KW-0067">ATP-binding</keyword>
<keyword id="KW-0315">Glutamine amidotransferase</keyword>
<keyword id="KW-0332">GMP biosynthesis</keyword>
<keyword id="KW-0436">Ligase</keyword>
<keyword id="KW-0547">Nucleotide-binding</keyword>
<keyword id="KW-0658">Purine biosynthesis</keyword>
<feature type="chain" id="PRO_1000120334" description="GMP synthase [glutamine-hydrolyzing]">
    <location>
        <begin position="1"/>
        <end position="525"/>
    </location>
</feature>
<feature type="domain" description="Glutamine amidotransferase type-1" evidence="1">
    <location>
        <begin position="9"/>
        <end position="207"/>
    </location>
</feature>
<feature type="domain" description="GMPS ATP-PPase" evidence="1">
    <location>
        <begin position="208"/>
        <end position="400"/>
    </location>
</feature>
<feature type="active site" description="Nucleophile" evidence="1">
    <location>
        <position position="86"/>
    </location>
</feature>
<feature type="active site" evidence="1">
    <location>
        <position position="181"/>
    </location>
</feature>
<feature type="active site" evidence="1">
    <location>
        <position position="183"/>
    </location>
</feature>
<feature type="binding site" evidence="1">
    <location>
        <begin position="235"/>
        <end position="241"/>
    </location>
    <ligand>
        <name>ATP</name>
        <dbReference type="ChEBI" id="CHEBI:30616"/>
    </ligand>
</feature>
<proteinExistence type="inferred from homology"/>
<sequence length="525" mass="58304">MSQDIHAHKILILDFGSQYTQLIARRVREIGVYCEVRAFDMEDQDVIDFDPKGIILAGGPESVPEPGSPRAPEAVFTLGVPVFGICYGMQTMAEQLGGKVQGSEIREFGYAQIRKHEGPALFDDIQDHIANNGVALLDVWMSHGDKVITMPEDFTLMASTDSCPIAAMANEAKKFYGVQFHPEVTHTLQGGRILSRFIVDICGCDTLWTPANIAQDAIERMQEQVGDKKVLLALSGGVDSSVVAALLHKAIGDQLTCVFVDNGLLRLHEGDQVMKMFADNMGVKVIRVDAEDLFLGKLANEADPEKKRKIIGNTFIDVFDTEATKLTDVEFLAQGTIYPDVIESAASKTGKAHVIKSHHNVGGLPEDMQFKLVEPLRELFKDEVRKLGLELGLPYDMVYRHPFPGPGLGVRILGEVKKEYADILRRADAIFIEELRNAGWYEKTSQAFAVFLPVKSVGVVGDGRRYEYVVALRAVETIDFMTARWAHLPYELLEKVSGRIINEIEHISRVTYDVSSKPPATIEWE</sequence>